<accession>Q0WSK8</accession>
<accession>A0A178V627</accession>
<accession>Q9SVX8</accession>
<proteinExistence type="evidence at protein level"/>
<protein>
    <recommendedName>
        <fullName evidence="3">Non-functional pseudokinase ZRK15</fullName>
    </recommendedName>
</protein>
<keyword id="KW-0067">ATP-binding</keyword>
<keyword id="KW-0547">Nucleotide-binding</keyword>
<keyword id="KW-1185">Reference proteome</keyword>
<name>ZRK15_ARATH</name>
<organism>
    <name type="scientific">Arabidopsis thaliana</name>
    <name type="common">Mouse-ear cress</name>
    <dbReference type="NCBI Taxonomy" id="3702"/>
    <lineage>
        <taxon>Eukaryota</taxon>
        <taxon>Viridiplantae</taxon>
        <taxon>Streptophyta</taxon>
        <taxon>Embryophyta</taxon>
        <taxon>Tracheophyta</taxon>
        <taxon>Spermatophyta</taxon>
        <taxon>Magnoliopsida</taxon>
        <taxon>eudicotyledons</taxon>
        <taxon>Gunneridae</taxon>
        <taxon>Pentapetalae</taxon>
        <taxon>rosids</taxon>
        <taxon>malvids</taxon>
        <taxon>Brassicales</taxon>
        <taxon>Brassicaceae</taxon>
        <taxon>Camelineae</taxon>
        <taxon>Arabidopsis</taxon>
    </lineage>
</organism>
<gene>
    <name evidence="3" type="primary">ZRK15</name>
    <name evidence="5" type="ordered locus">At3g57640</name>
    <name evidence="6" type="ORF">F15B8.170</name>
</gene>
<reference key="1">
    <citation type="journal article" date="2000" name="Nature">
        <title>Sequence and analysis of chromosome 3 of the plant Arabidopsis thaliana.</title>
        <authorList>
            <person name="Salanoubat M."/>
            <person name="Lemcke K."/>
            <person name="Rieger M."/>
            <person name="Ansorge W."/>
            <person name="Unseld M."/>
            <person name="Fartmann B."/>
            <person name="Valle G."/>
            <person name="Bloecker H."/>
            <person name="Perez-Alonso M."/>
            <person name="Obermaier B."/>
            <person name="Delseny M."/>
            <person name="Boutry M."/>
            <person name="Grivell L.A."/>
            <person name="Mache R."/>
            <person name="Puigdomenech P."/>
            <person name="De Simone V."/>
            <person name="Choisne N."/>
            <person name="Artiguenave F."/>
            <person name="Robert C."/>
            <person name="Brottier P."/>
            <person name="Wincker P."/>
            <person name="Cattolico L."/>
            <person name="Weissenbach J."/>
            <person name="Saurin W."/>
            <person name="Quetier F."/>
            <person name="Schaefer M."/>
            <person name="Mueller-Auer S."/>
            <person name="Gabel C."/>
            <person name="Fuchs M."/>
            <person name="Benes V."/>
            <person name="Wurmbach E."/>
            <person name="Drzonek H."/>
            <person name="Erfle H."/>
            <person name="Jordan N."/>
            <person name="Bangert S."/>
            <person name="Wiedelmann R."/>
            <person name="Kranz H."/>
            <person name="Voss H."/>
            <person name="Holland R."/>
            <person name="Brandt P."/>
            <person name="Nyakatura G."/>
            <person name="Vezzi A."/>
            <person name="D'Angelo M."/>
            <person name="Pallavicini A."/>
            <person name="Toppo S."/>
            <person name="Simionati B."/>
            <person name="Conrad A."/>
            <person name="Hornischer K."/>
            <person name="Kauer G."/>
            <person name="Loehnert T.-H."/>
            <person name="Nordsiek G."/>
            <person name="Reichelt J."/>
            <person name="Scharfe M."/>
            <person name="Schoen O."/>
            <person name="Bargues M."/>
            <person name="Terol J."/>
            <person name="Climent J."/>
            <person name="Navarro P."/>
            <person name="Collado C."/>
            <person name="Perez-Perez A."/>
            <person name="Ottenwaelder B."/>
            <person name="Duchemin D."/>
            <person name="Cooke R."/>
            <person name="Laudie M."/>
            <person name="Berger-Llauro C."/>
            <person name="Purnelle B."/>
            <person name="Masuy D."/>
            <person name="de Haan M."/>
            <person name="Maarse A.C."/>
            <person name="Alcaraz J.-P."/>
            <person name="Cottet A."/>
            <person name="Casacuberta E."/>
            <person name="Monfort A."/>
            <person name="Argiriou A."/>
            <person name="Flores M."/>
            <person name="Liguori R."/>
            <person name="Vitale D."/>
            <person name="Mannhaupt G."/>
            <person name="Haase D."/>
            <person name="Schoof H."/>
            <person name="Rudd S."/>
            <person name="Zaccaria P."/>
            <person name="Mewes H.-W."/>
            <person name="Mayer K.F.X."/>
            <person name="Kaul S."/>
            <person name="Town C.D."/>
            <person name="Koo H.L."/>
            <person name="Tallon L.J."/>
            <person name="Jenkins J."/>
            <person name="Rooney T."/>
            <person name="Rizzo M."/>
            <person name="Walts A."/>
            <person name="Utterback T."/>
            <person name="Fujii C.Y."/>
            <person name="Shea T.P."/>
            <person name="Creasy T.H."/>
            <person name="Haas B."/>
            <person name="Maiti R."/>
            <person name="Wu D."/>
            <person name="Peterson J."/>
            <person name="Van Aken S."/>
            <person name="Pai G."/>
            <person name="Militscher J."/>
            <person name="Sellers P."/>
            <person name="Gill J.E."/>
            <person name="Feldblyum T.V."/>
            <person name="Preuss D."/>
            <person name="Lin X."/>
            <person name="Nierman W.C."/>
            <person name="Salzberg S.L."/>
            <person name="White O."/>
            <person name="Venter J.C."/>
            <person name="Fraser C.M."/>
            <person name="Kaneko T."/>
            <person name="Nakamura Y."/>
            <person name="Sato S."/>
            <person name="Kato T."/>
            <person name="Asamizu E."/>
            <person name="Sasamoto S."/>
            <person name="Kimura T."/>
            <person name="Idesawa K."/>
            <person name="Kawashima K."/>
            <person name="Kishida Y."/>
            <person name="Kiyokawa C."/>
            <person name="Kohara M."/>
            <person name="Matsumoto M."/>
            <person name="Matsuno A."/>
            <person name="Muraki A."/>
            <person name="Nakayama S."/>
            <person name="Nakazaki N."/>
            <person name="Shinpo S."/>
            <person name="Takeuchi C."/>
            <person name="Wada T."/>
            <person name="Watanabe A."/>
            <person name="Yamada M."/>
            <person name="Yasuda M."/>
            <person name="Tabata S."/>
        </authorList>
    </citation>
    <scope>NUCLEOTIDE SEQUENCE [LARGE SCALE GENOMIC DNA]</scope>
    <source>
        <strain>cv. Columbia</strain>
    </source>
</reference>
<reference key="2">
    <citation type="journal article" date="2017" name="Plant J.">
        <title>Araport11: a complete reannotation of the Arabidopsis thaliana reference genome.</title>
        <authorList>
            <person name="Cheng C.Y."/>
            <person name="Krishnakumar V."/>
            <person name="Chan A.P."/>
            <person name="Thibaud-Nissen F."/>
            <person name="Schobel S."/>
            <person name="Town C.D."/>
        </authorList>
    </citation>
    <scope>GENOME REANNOTATION</scope>
    <source>
        <strain>cv. Columbia</strain>
    </source>
</reference>
<reference key="3">
    <citation type="submission" date="2004-03" db="EMBL/GenBank/DDBJ databases">
        <title>Arabidopsis ORF clones.</title>
        <authorList>
            <person name="Cheuk R.F."/>
            <person name="Chen H."/>
            <person name="Kim C.J."/>
            <person name="Shinn P."/>
            <person name="Ecker J.R."/>
        </authorList>
    </citation>
    <scope>NUCLEOTIDE SEQUENCE [LARGE SCALE MRNA]</scope>
    <source>
        <strain>cv. Columbia</strain>
    </source>
</reference>
<reference key="4">
    <citation type="submission" date="2006-07" db="EMBL/GenBank/DDBJ databases">
        <title>Large-scale analysis of RIKEN Arabidopsis full-length (RAFL) cDNAs.</title>
        <authorList>
            <person name="Totoki Y."/>
            <person name="Seki M."/>
            <person name="Ishida J."/>
            <person name="Nakajima M."/>
            <person name="Enju A."/>
            <person name="Kamiya A."/>
            <person name="Narusaka M."/>
            <person name="Shin-i T."/>
            <person name="Nakagawa M."/>
            <person name="Sakamoto N."/>
            <person name="Oishi K."/>
            <person name="Kohara Y."/>
            <person name="Kobayashi M."/>
            <person name="Toyoda A."/>
            <person name="Sakaki Y."/>
            <person name="Sakurai T."/>
            <person name="Iida K."/>
            <person name="Akiyama K."/>
            <person name="Satou M."/>
            <person name="Toyoda T."/>
            <person name="Konagaya A."/>
            <person name="Carninci P."/>
            <person name="Kawai J."/>
            <person name="Hayashizaki Y."/>
            <person name="Shinozaki K."/>
        </authorList>
    </citation>
    <scope>NUCLEOTIDE SEQUENCE [LARGE SCALE MRNA]</scope>
    <source>
        <strain>cv. Columbia</strain>
    </source>
</reference>
<reference key="5">
    <citation type="journal article" date="2015" name="Cell Host Microbe">
        <title>The decoy substrate of a pathogen effector and a pseudokinase specify pathogen-induced modified-self recognition and immunity in plants.</title>
        <authorList>
            <person name="Wang G."/>
            <person name="Roux B."/>
            <person name="Feng F."/>
            <person name="Guy E."/>
            <person name="Li L."/>
            <person name="Li N."/>
            <person name="Zhang X."/>
            <person name="Lautier M."/>
            <person name="Jardinaud M.-F."/>
            <person name="Chabannes M."/>
            <person name="Arlat M."/>
            <person name="Chen S."/>
            <person name="He C."/>
            <person name="Noel L.D."/>
            <person name="Zhou J.-M."/>
        </authorList>
    </citation>
    <scope>INTERACTION WITH RPP13L4/ZAR1</scope>
    <scope>GENE FAMILY</scope>
    <scope>NOMENCLATURE</scope>
    <source>
        <strain>cv. Columbia</strain>
    </source>
</reference>
<feature type="chain" id="PRO_0000449495" description="Non-functional pseudokinase ZRK15">
    <location>
        <begin position="1"/>
        <end position="356"/>
    </location>
</feature>
<feature type="domain" description="Protein kinase" evidence="1">
    <location>
        <begin position="62"/>
        <end position="356"/>
    </location>
</feature>
<feature type="binding site" evidence="1">
    <location>
        <begin position="68"/>
        <end position="76"/>
    </location>
    <ligand>
        <name>ATP</name>
        <dbReference type="ChEBI" id="CHEBI:30616"/>
    </ligand>
</feature>
<feature type="binding site" evidence="1">
    <location>
        <position position="94"/>
    </location>
    <ligand>
        <name>ATP</name>
        <dbReference type="ChEBI" id="CHEBI:30616"/>
    </ligand>
</feature>
<feature type="sequence conflict" description="In Ref. 4; BAE99890." evidence="4" ref="4">
    <original>K</original>
    <variation>E</variation>
    <location>
        <position position="341"/>
    </location>
</feature>
<comment type="subunit">
    <text evidence="2">Interacts with RPP13L4/ZAR1.</text>
</comment>
<comment type="domain">
    <text evidence="1">The protein kinase domain is predicted to be catalytically inactive.</text>
</comment>
<comment type="similarity">
    <text evidence="4">Belongs to the protein kinase superfamily. Ser/Thr protein kinase family. ZRK subfamily.</text>
</comment>
<sequence>MEWWKKKSLRAIIKRERLVRGHERGGTLLEEIIKSCNGKANPIKIFSADQILEATDTFSESNRVSELFDEIPYDWYYSGKNNNHHHHHKLLLIKKWRYRFSEHNGGNFCRDIAISSIVSGHKNFMQLVGCCLESEHPVLVYRASKKPTSLDLKMVVSWRQRLKIAEEIATALAYLHTAFPRPFVYRILRLEDILLDDEDGVAKLCNFSYCVSIPQGETFVKLGNGCIGGDYDYMDDNYLINGIVSEKTDAFGFGIFMQKLLMGEERFHELCYDRSDLTTFENRRKFAKCIDEIVDSNMLEKIGDVTEEERCRMEAFIVLSERCIGLRGEVPKMVEVAKELKRFLRDSSSSCGETSL</sequence>
<evidence type="ECO:0000255" key="1">
    <source>
        <dbReference type="PROSITE-ProRule" id="PRU00159"/>
    </source>
</evidence>
<evidence type="ECO:0000269" key="2">
    <source>
    </source>
</evidence>
<evidence type="ECO:0000303" key="3">
    <source>
    </source>
</evidence>
<evidence type="ECO:0000305" key="4"/>
<evidence type="ECO:0000312" key="5">
    <source>
        <dbReference type="Araport" id="AT3G57640"/>
    </source>
</evidence>
<evidence type="ECO:0000312" key="6">
    <source>
        <dbReference type="EMBL" id="CAB41191.1"/>
    </source>
</evidence>
<dbReference type="EMBL" id="AL049660">
    <property type="protein sequence ID" value="CAB41191.1"/>
    <property type="molecule type" value="Genomic_DNA"/>
</dbReference>
<dbReference type="EMBL" id="CP002686">
    <property type="protein sequence ID" value="AEE79682.1"/>
    <property type="molecule type" value="Genomic_DNA"/>
</dbReference>
<dbReference type="EMBL" id="BT011681">
    <property type="protein sequence ID" value="AAS49044.1"/>
    <property type="molecule type" value="mRNA"/>
</dbReference>
<dbReference type="EMBL" id="BT012262">
    <property type="protein sequence ID" value="AAS76749.1"/>
    <property type="molecule type" value="mRNA"/>
</dbReference>
<dbReference type="EMBL" id="AK227920">
    <property type="protein sequence ID" value="BAE99890.1"/>
    <property type="molecule type" value="mRNA"/>
</dbReference>
<dbReference type="PIR" id="T06756">
    <property type="entry name" value="T06756"/>
</dbReference>
<dbReference type="RefSeq" id="NP_191323.1">
    <property type="nucleotide sequence ID" value="NM_115624.3"/>
</dbReference>
<dbReference type="SMR" id="Q0WSK8"/>
<dbReference type="FunCoup" id="Q0WSK8">
    <property type="interactions" value="22"/>
</dbReference>
<dbReference type="PaxDb" id="3702-AT3G57640.1"/>
<dbReference type="EnsemblPlants" id="AT3G57640.1">
    <property type="protein sequence ID" value="AT3G57640.1"/>
    <property type="gene ID" value="AT3G57640"/>
</dbReference>
<dbReference type="GeneID" id="824933"/>
<dbReference type="Gramene" id="AT3G57640.1">
    <property type="protein sequence ID" value="AT3G57640.1"/>
    <property type="gene ID" value="AT3G57640"/>
</dbReference>
<dbReference type="KEGG" id="ath:AT3G57640"/>
<dbReference type="Araport" id="AT3G57640"/>
<dbReference type="TAIR" id="AT3G57640">
    <property type="gene designation" value="ZRK15"/>
</dbReference>
<dbReference type="eggNOG" id="KOG1187">
    <property type="taxonomic scope" value="Eukaryota"/>
</dbReference>
<dbReference type="HOGENOM" id="CLU_000288_21_4_1"/>
<dbReference type="InParanoid" id="Q0WSK8"/>
<dbReference type="OMA" id="NHRMILL"/>
<dbReference type="OrthoDB" id="1084811at2759"/>
<dbReference type="PRO" id="PR:Q0WSK8"/>
<dbReference type="Proteomes" id="UP000006548">
    <property type="component" value="Chromosome 3"/>
</dbReference>
<dbReference type="ExpressionAtlas" id="Q0WSK8">
    <property type="expression patterns" value="baseline and differential"/>
</dbReference>
<dbReference type="GO" id="GO:0005524">
    <property type="term" value="F:ATP binding"/>
    <property type="evidence" value="ECO:0007669"/>
    <property type="project" value="UniProtKB-KW"/>
</dbReference>
<dbReference type="GO" id="GO:0004672">
    <property type="term" value="F:protein kinase activity"/>
    <property type="evidence" value="ECO:0007669"/>
    <property type="project" value="InterPro"/>
</dbReference>
<dbReference type="GO" id="GO:0007166">
    <property type="term" value="P:cell surface receptor signaling pathway"/>
    <property type="evidence" value="ECO:0007669"/>
    <property type="project" value="InterPro"/>
</dbReference>
<dbReference type="FunFam" id="3.30.200.20:FF:000515">
    <property type="entry name" value="Inactive serine/threonine-protein kinase"/>
    <property type="match status" value="1"/>
</dbReference>
<dbReference type="FunFam" id="1.10.510.10:FF:001251">
    <property type="entry name" value="Inactive serine/threonine-protein kinase At1g67470"/>
    <property type="match status" value="1"/>
</dbReference>
<dbReference type="Gene3D" id="3.30.200.20">
    <property type="entry name" value="Phosphorylase Kinase, domain 1"/>
    <property type="match status" value="1"/>
</dbReference>
<dbReference type="Gene3D" id="1.10.510.10">
    <property type="entry name" value="Transferase(Phosphotransferase) domain 1"/>
    <property type="match status" value="1"/>
</dbReference>
<dbReference type="InterPro" id="IPR011009">
    <property type="entry name" value="Kinase-like_dom_sf"/>
</dbReference>
<dbReference type="InterPro" id="IPR000719">
    <property type="entry name" value="Prot_kinase_dom"/>
</dbReference>
<dbReference type="InterPro" id="IPR045274">
    <property type="entry name" value="WAK-like"/>
</dbReference>
<dbReference type="PANTHER" id="PTHR27005:SF188">
    <property type="entry name" value="INACTIVE SERINE_THREONINE-PROTEIN KINASE ZRK12-RELATED"/>
    <property type="match status" value="1"/>
</dbReference>
<dbReference type="PANTHER" id="PTHR27005">
    <property type="entry name" value="WALL-ASSOCIATED RECEPTOR KINASE-LIKE 21"/>
    <property type="match status" value="1"/>
</dbReference>
<dbReference type="Pfam" id="PF00069">
    <property type="entry name" value="Pkinase"/>
    <property type="match status" value="1"/>
</dbReference>
<dbReference type="SUPFAM" id="SSF56112">
    <property type="entry name" value="Protein kinase-like (PK-like)"/>
    <property type="match status" value="1"/>
</dbReference>
<dbReference type="PROSITE" id="PS50011">
    <property type="entry name" value="PROTEIN_KINASE_DOM"/>
    <property type="match status" value="1"/>
</dbReference>